<keyword id="KW-1185">Reference proteome</keyword>
<reference key="1">
    <citation type="journal article" date="1998" name="Science">
        <title>Genome sequence of the nematode C. elegans: a platform for investigating biology.</title>
        <authorList>
            <consortium name="The C. elegans sequencing consortium"/>
        </authorList>
    </citation>
    <scope>NUCLEOTIDE SEQUENCE [LARGE SCALE GENOMIC DNA]</scope>
    <source>
        <strain>Bristol N2</strain>
    </source>
</reference>
<name>YR51_CAEEL</name>
<protein>
    <recommendedName>
        <fullName>Uncharacterized protein F42A8.1</fullName>
    </recommendedName>
</protein>
<dbReference type="EMBL" id="Z47809">
    <property type="protein sequence ID" value="CAA87779.1"/>
    <property type="molecule type" value="Genomic_DNA"/>
</dbReference>
<dbReference type="PIR" id="T22082">
    <property type="entry name" value="T22082"/>
</dbReference>
<dbReference type="RefSeq" id="NP_495991.1">
    <property type="nucleotide sequence ID" value="NM_063590.6"/>
</dbReference>
<dbReference type="BioGRID" id="39805">
    <property type="interactions" value="6"/>
</dbReference>
<dbReference type="FunCoup" id="Q09321">
    <property type="interactions" value="6"/>
</dbReference>
<dbReference type="STRING" id="6239.F42A8.1.1"/>
<dbReference type="PaxDb" id="6239-F42A8.1"/>
<dbReference type="PeptideAtlas" id="Q09321"/>
<dbReference type="EnsemblMetazoa" id="F42A8.1.1">
    <property type="protein sequence ID" value="F42A8.1.1"/>
    <property type="gene ID" value="WBGene00009626"/>
</dbReference>
<dbReference type="GeneID" id="174481"/>
<dbReference type="KEGG" id="cel:CELE_F42A8.1"/>
<dbReference type="UCSC" id="F42A8.1">
    <property type="organism name" value="c. elegans"/>
</dbReference>
<dbReference type="AGR" id="WB:WBGene00009626"/>
<dbReference type="CTD" id="174481"/>
<dbReference type="WormBase" id="F42A8.1">
    <property type="protein sequence ID" value="CE01578"/>
    <property type="gene ID" value="WBGene00009626"/>
</dbReference>
<dbReference type="eggNOG" id="ENOG502SAVS">
    <property type="taxonomic scope" value="Eukaryota"/>
</dbReference>
<dbReference type="GeneTree" id="ENSGT00390000013558"/>
<dbReference type="HOGENOM" id="CLU_047617_0_0_1"/>
<dbReference type="InParanoid" id="Q09321"/>
<dbReference type="OMA" id="WTDAKNT"/>
<dbReference type="OrthoDB" id="5911931at2759"/>
<dbReference type="PhylomeDB" id="Q09321"/>
<dbReference type="PRO" id="PR:Q09321"/>
<dbReference type="Proteomes" id="UP000001940">
    <property type="component" value="Chromosome II"/>
</dbReference>
<dbReference type="Bgee" id="WBGene00009626">
    <property type="expression patterns" value="Expressed in adult organism and 7 other cell types or tissues"/>
</dbReference>
<dbReference type="InterPro" id="IPR040282">
    <property type="entry name" value="Mig-18-like"/>
</dbReference>
<dbReference type="InterPro" id="IPR055119">
    <property type="entry name" value="Mig18_Fn1"/>
</dbReference>
<dbReference type="PANTHER" id="PTHR35572">
    <property type="entry name" value="PROTEIN CBG04538-RELATED"/>
    <property type="match status" value="1"/>
</dbReference>
<dbReference type="PANTHER" id="PTHR35572:SF4">
    <property type="entry name" value="PROTEIN CBG15747"/>
    <property type="match status" value="1"/>
</dbReference>
<dbReference type="Pfam" id="PF23003">
    <property type="entry name" value="Fn1_2"/>
    <property type="match status" value="3"/>
</dbReference>
<feature type="chain" id="PRO_0000065334" description="Uncharacterized protein F42A8.1">
    <location>
        <begin position="1"/>
        <end position="370"/>
    </location>
</feature>
<proteinExistence type="predicted"/>
<organism>
    <name type="scientific">Caenorhabditis elegans</name>
    <dbReference type="NCBI Taxonomy" id="6239"/>
    <lineage>
        <taxon>Eukaryota</taxon>
        <taxon>Metazoa</taxon>
        <taxon>Ecdysozoa</taxon>
        <taxon>Nematoda</taxon>
        <taxon>Chromadorea</taxon>
        <taxon>Rhabditida</taxon>
        <taxon>Rhabditina</taxon>
        <taxon>Rhabditomorpha</taxon>
        <taxon>Rhabditoidea</taxon>
        <taxon>Rhabditidae</taxon>
        <taxon>Peloderinae</taxon>
        <taxon>Caenorhabditis</taxon>
    </lineage>
</organism>
<sequence length="370" mass="41975">MQNNLVLLILSILSIFEVSAYSNVEKGAAARARCWTSGNGRPAQWWQEGDQVTRGKYFYECRRGQLEPLGCLSSTEEKIPLGHTFQQDRYEFICQLGSDGYIEFGYSACVGTDGRTYQKGETWTDAKNTYYYRCRDDGRVVKTTIEGCIAHDKQRRVPLGQTDDFNGYTYKCQQKTTGVVQMCSVGCIHEGTRYTVGQQYRDGDYLFYCKLQGGKCTKQCIGCVAGGQDLYDGQRYKRDGTTYQCEIRPGKRSHRAVGCSIVENGRDINKVIGCRWYEQNPDWKIEKTCETDGDNKTKVTTVGCIYKYKGFDRIFLEPGKYTIWNLPKQKDSSVGLACRKTADGAELVIFDVAQLERNTSGLKYDLPRGK</sequence>
<accession>Q09321</accession>
<gene>
    <name type="ORF">F42A8.1</name>
</gene>